<accession>Q9PIB4</accession>
<accession>Q0PBC2</accession>
<sequence>MRVLTGLQPSGDLHIGNYFGAIKQMVDAQEKSQMFMFIANYHAMTSSQDGEKLKQNSLKAAAAFLSLGIDPQKSVFWLQSDVKEVMELYWILSQFTPMGLLERAHSYKDKVAKGLSASHGLFSYPVLMAADILLFDTRIVPVGKDQIQHVEIARDIALKVNNEWGEIFTLPEARVNEEVAVVVGTDGAKMSKSYQNTIDIFSSEKTLKKQISSIVTDSTALEDPKDHENCNIFKIAKLFLDESGQKELQIRYEKGGEGYGHFKIYLNELVNAYFKEAREKYNELLEKPSHLKEILDFGATKARKIAQEKMQKIYEKIGL</sequence>
<reference key="1">
    <citation type="journal article" date="2000" name="Nature">
        <title>The genome sequence of the food-borne pathogen Campylobacter jejuni reveals hypervariable sequences.</title>
        <authorList>
            <person name="Parkhill J."/>
            <person name="Wren B.W."/>
            <person name="Mungall K.L."/>
            <person name="Ketley J.M."/>
            <person name="Churcher C.M."/>
            <person name="Basham D."/>
            <person name="Chillingworth T."/>
            <person name="Davies R.M."/>
            <person name="Feltwell T."/>
            <person name="Holroyd S."/>
            <person name="Jagels K."/>
            <person name="Karlyshev A.V."/>
            <person name="Moule S."/>
            <person name="Pallen M.J."/>
            <person name="Penn C.W."/>
            <person name="Quail M.A."/>
            <person name="Rajandream M.A."/>
            <person name="Rutherford K.M."/>
            <person name="van Vliet A.H.M."/>
            <person name="Whitehead S."/>
            <person name="Barrell B.G."/>
        </authorList>
    </citation>
    <scope>NUCLEOTIDE SEQUENCE [LARGE SCALE GENOMIC DNA]</scope>
    <source>
        <strain>ATCC 700819 / NCTC 11168</strain>
    </source>
</reference>
<proteinExistence type="evidence at protein level"/>
<keyword id="KW-0002">3D-structure</keyword>
<keyword id="KW-0030">Aminoacyl-tRNA synthetase</keyword>
<keyword id="KW-0067">ATP-binding</keyword>
<keyword id="KW-0963">Cytoplasm</keyword>
<keyword id="KW-0436">Ligase</keyword>
<keyword id="KW-0547">Nucleotide-binding</keyword>
<keyword id="KW-0648">Protein biosynthesis</keyword>
<keyword id="KW-1185">Reference proteome</keyword>
<feature type="chain" id="PRO_0000136613" description="Tryptophan--tRNA ligase">
    <location>
        <begin position="1"/>
        <end position="319"/>
    </location>
</feature>
<feature type="short sequence motif" description="'HIGH' region" evidence="1">
    <location>
        <begin position="9"/>
        <end position="17"/>
    </location>
</feature>
<feature type="short sequence motif" description="'KMSKS' region" evidence="1">
    <location>
        <begin position="189"/>
        <end position="193"/>
    </location>
</feature>
<feature type="binding site" evidence="1">
    <location>
        <begin position="8"/>
        <end position="10"/>
    </location>
    <ligand>
        <name>ATP</name>
        <dbReference type="ChEBI" id="CHEBI:30616"/>
    </ligand>
</feature>
<feature type="binding site" evidence="1">
    <location>
        <begin position="16"/>
        <end position="17"/>
    </location>
    <ligand>
        <name>ATP</name>
        <dbReference type="ChEBI" id="CHEBI:30616"/>
    </ligand>
</feature>
<feature type="binding site" evidence="1">
    <location>
        <position position="131"/>
    </location>
    <ligand>
        <name>L-tryptophan</name>
        <dbReference type="ChEBI" id="CHEBI:57912"/>
    </ligand>
</feature>
<feature type="binding site" evidence="1">
    <location>
        <begin position="143"/>
        <end position="145"/>
    </location>
    <ligand>
        <name>ATP</name>
        <dbReference type="ChEBI" id="CHEBI:30616"/>
    </ligand>
</feature>
<feature type="binding site" evidence="1">
    <location>
        <position position="182"/>
    </location>
    <ligand>
        <name>ATP</name>
        <dbReference type="ChEBI" id="CHEBI:30616"/>
    </ligand>
</feature>
<feature type="binding site" evidence="1">
    <location>
        <begin position="189"/>
        <end position="193"/>
    </location>
    <ligand>
        <name>ATP</name>
        <dbReference type="ChEBI" id="CHEBI:30616"/>
    </ligand>
</feature>
<feature type="strand" evidence="2">
    <location>
        <begin position="3"/>
        <end position="7"/>
    </location>
</feature>
<feature type="helix" evidence="2">
    <location>
        <begin position="15"/>
        <end position="20"/>
    </location>
</feature>
<feature type="helix" evidence="2">
    <location>
        <begin position="22"/>
        <end position="27"/>
    </location>
</feature>
<feature type="turn" evidence="2">
    <location>
        <begin position="28"/>
        <end position="31"/>
    </location>
</feature>
<feature type="strand" evidence="2">
    <location>
        <begin position="35"/>
        <end position="38"/>
    </location>
</feature>
<feature type="helix" evidence="2">
    <location>
        <begin position="40"/>
        <end position="43"/>
    </location>
</feature>
<feature type="turn" evidence="2">
    <location>
        <begin position="44"/>
        <end position="46"/>
    </location>
</feature>
<feature type="helix" evidence="2">
    <location>
        <begin position="50"/>
        <end position="66"/>
    </location>
</feature>
<feature type="turn" evidence="2">
    <location>
        <begin position="71"/>
        <end position="73"/>
    </location>
</feature>
<feature type="strand" evidence="2">
    <location>
        <begin position="74"/>
        <end position="78"/>
    </location>
</feature>
<feature type="helix" evidence="2">
    <location>
        <begin position="79"/>
        <end position="81"/>
    </location>
</feature>
<feature type="helix" evidence="2">
    <location>
        <begin position="84"/>
        <end position="92"/>
    </location>
</feature>
<feature type="helix" evidence="2">
    <location>
        <begin position="93"/>
        <end position="95"/>
    </location>
</feature>
<feature type="helix" evidence="2">
    <location>
        <begin position="98"/>
        <end position="102"/>
    </location>
</feature>
<feature type="helix" evidence="2">
    <location>
        <begin position="105"/>
        <end position="112"/>
    </location>
</feature>
<feature type="helix" evidence="2">
    <location>
        <begin position="119"/>
        <end position="134"/>
    </location>
</feature>
<feature type="strand" evidence="2">
    <location>
        <begin position="138"/>
        <end position="141"/>
    </location>
</feature>
<feature type="helix" evidence="2">
    <location>
        <begin position="144"/>
        <end position="146"/>
    </location>
</feature>
<feature type="helix" evidence="2">
    <location>
        <begin position="147"/>
        <end position="164"/>
    </location>
</feature>
<feature type="strand" evidence="2">
    <location>
        <begin position="172"/>
        <end position="174"/>
    </location>
</feature>
<feature type="strand" evidence="2">
    <location>
        <begin position="187"/>
        <end position="189"/>
    </location>
</feature>
<feature type="helix" evidence="2">
    <location>
        <begin position="192"/>
        <end position="194"/>
    </location>
</feature>
<feature type="strand" evidence="2">
    <location>
        <begin position="199"/>
        <end position="201"/>
    </location>
</feature>
<feature type="helix" evidence="2">
    <location>
        <begin position="204"/>
        <end position="212"/>
    </location>
</feature>
<feature type="helix" evidence="2">
    <location>
        <begin position="227"/>
        <end position="229"/>
    </location>
</feature>
<feature type="helix" evidence="2">
    <location>
        <begin position="231"/>
        <end position="236"/>
    </location>
</feature>
<feature type="helix" evidence="2">
    <location>
        <begin position="237"/>
        <end position="239"/>
    </location>
</feature>
<feature type="helix" evidence="2">
    <location>
        <begin position="242"/>
        <end position="254"/>
    </location>
</feature>
<feature type="helix" evidence="2">
    <location>
        <begin position="259"/>
        <end position="273"/>
    </location>
</feature>
<feature type="helix" evidence="2">
    <location>
        <begin position="275"/>
        <end position="286"/>
    </location>
</feature>
<feature type="helix" evidence="2">
    <location>
        <begin position="288"/>
        <end position="317"/>
    </location>
</feature>
<name>SYW_CAMJE</name>
<organism>
    <name type="scientific">Campylobacter jejuni subsp. jejuni serotype O:2 (strain ATCC 700819 / NCTC 11168)</name>
    <dbReference type="NCBI Taxonomy" id="192222"/>
    <lineage>
        <taxon>Bacteria</taxon>
        <taxon>Pseudomonadati</taxon>
        <taxon>Campylobacterota</taxon>
        <taxon>Epsilonproteobacteria</taxon>
        <taxon>Campylobacterales</taxon>
        <taxon>Campylobacteraceae</taxon>
        <taxon>Campylobacter</taxon>
    </lineage>
</organism>
<evidence type="ECO:0000255" key="1">
    <source>
        <dbReference type="HAMAP-Rule" id="MF_00140"/>
    </source>
</evidence>
<evidence type="ECO:0007829" key="2">
    <source>
        <dbReference type="PDB" id="3TZL"/>
    </source>
</evidence>
<dbReference type="EC" id="6.1.1.2" evidence="1"/>
<dbReference type="EMBL" id="AL111168">
    <property type="protein sequence ID" value="CAL34538.1"/>
    <property type="molecule type" value="Genomic_DNA"/>
</dbReference>
<dbReference type="PIR" id="B81382">
    <property type="entry name" value="B81382"/>
</dbReference>
<dbReference type="RefSeq" id="WP_002858719.1">
    <property type="nucleotide sequence ID" value="NZ_SZUC01000004.1"/>
</dbReference>
<dbReference type="RefSeq" id="YP_002343825.1">
    <property type="nucleotide sequence ID" value="NC_002163.1"/>
</dbReference>
<dbReference type="PDB" id="3M5W">
    <property type="method" value="X-ray"/>
    <property type="resolution" value="2.32 A"/>
    <property type="chains" value="A/B=1-319"/>
</dbReference>
<dbReference type="PDB" id="3TZL">
    <property type="method" value="X-ray"/>
    <property type="resolution" value="2.15 A"/>
    <property type="chains" value="A/B=1-319"/>
</dbReference>
<dbReference type="PDBsum" id="3M5W"/>
<dbReference type="PDBsum" id="3TZL"/>
<dbReference type="SMR" id="Q9PIB4"/>
<dbReference type="IntAct" id="Q9PIB4">
    <property type="interactions" value="3"/>
</dbReference>
<dbReference type="STRING" id="192222.Cj0388"/>
<dbReference type="PaxDb" id="192222-Cj0388"/>
<dbReference type="EnsemblBacteria" id="CAL34538">
    <property type="protein sequence ID" value="CAL34538"/>
    <property type="gene ID" value="Cj0388"/>
</dbReference>
<dbReference type="GeneID" id="904711"/>
<dbReference type="KEGG" id="cje:Cj0388"/>
<dbReference type="PATRIC" id="fig|192222.6.peg.379"/>
<dbReference type="eggNOG" id="COG0180">
    <property type="taxonomic scope" value="Bacteria"/>
</dbReference>
<dbReference type="HOGENOM" id="CLU_029244_1_1_7"/>
<dbReference type="OrthoDB" id="9801042at2"/>
<dbReference type="EvolutionaryTrace" id="Q9PIB4"/>
<dbReference type="Proteomes" id="UP000000799">
    <property type="component" value="Chromosome"/>
</dbReference>
<dbReference type="GO" id="GO:0005829">
    <property type="term" value="C:cytosol"/>
    <property type="evidence" value="ECO:0007669"/>
    <property type="project" value="TreeGrafter"/>
</dbReference>
<dbReference type="GO" id="GO:0005524">
    <property type="term" value="F:ATP binding"/>
    <property type="evidence" value="ECO:0007669"/>
    <property type="project" value="UniProtKB-UniRule"/>
</dbReference>
<dbReference type="GO" id="GO:0004830">
    <property type="term" value="F:tryptophan-tRNA ligase activity"/>
    <property type="evidence" value="ECO:0007669"/>
    <property type="project" value="UniProtKB-UniRule"/>
</dbReference>
<dbReference type="GO" id="GO:0006436">
    <property type="term" value="P:tryptophanyl-tRNA aminoacylation"/>
    <property type="evidence" value="ECO:0007669"/>
    <property type="project" value="UniProtKB-UniRule"/>
</dbReference>
<dbReference type="CDD" id="cd00806">
    <property type="entry name" value="TrpRS_core"/>
    <property type="match status" value="1"/>
</dbReference>
<dbReference type="FunFam" id="1.10.240.10:FF:000005">
    <property type="entry name" value="Tryptophan--tRNA ligase"/>
    <property type="match status" value="1"/>
</dbReference>
<dbReference type="Gene3D" id="3.40.50.620">
    <property type="entry name" value="HUPs"/>
    <property type="match status" value="1"/>
</dbReference>
<dbReference type="Gene3D" id="1.10.240.10">
    <property type="entry name" value="Tyrosyl-Transfer RNA Synthetase"/>
    <property type="match status" value="1"/>
</dbReference>
<dbReference type="HAMAP" id="MF_00140_B">
    <property type="entry name" value="Trp_tRNA_synth_B"/>
    <property type="match status" value="1"/>
</dbReference>
<dbReference type="InterPro" id="IPR001412">
    <property type="entry name" value="aa-tRNA-synth_I_CS"/>
</dbReference>
<dbReference type="InterPro" id="IPR002305">
    <property type="entry name" value="aa-tRNA-synth_Ic"/>
</dbReference>
<dbReference type="InterPro" id="IPR014729">
    <property type="entry name" value="Rossmann-like_a/b/a_fold"/>
</dbReference>
<dbReference type="InterPro" id="IPR002306">
    <property type="entry name" value="Trp-tRNA-ligase"/>
</dbReference>
<dbReference type="InterPro" id="IPR024109">
    <property type="entry name" value="Trp-tRNA-ligase_bac-type"/>
</dbReference>
<dbReference type="InterPro" id="IPR050203">
    <property type="entry name" value="Trp-tRNA_synthetase"/>
</dbReference>
<dbReference type="NCBIfam" id="TIGR00233">
    <property type="entry name" value="trpS"/>
    <property type="match status" value="1"/>
</dbReference>
<dbReference type="PANTHER" id="PTHR43766">
    <property type="entry name" value="TRYPTOPHAN--TRNA LIGASE, MITOCHONDRIAL"/>
    <property type="match status" value="1"/>
</dbReference>
<dbReference type="PANTHER" id="PTHR43766:SF1">
    <property type="entry name" value="TRYPTOPHAN--TRNA LIGASE, MITOCHONDRIAL"/>
    <property type="match status" value="1"/>
</dbReference>
<dbReference type="Pfam" id="PF00579">
    <property type="entry name" value="tRNA-synt_1b"/>
    <property type="match status" value="1"/>
</dbReference>
<dbReference type="PRINTS" id="PR01039">
    <property type="entry name" value="TRNASYNTHTRP"/>
</dbReference>
<dbReference type="SUPFAM" id="SSF52374">
    <property type="entry name" value="Nucleotidylyl transferase"/>
    <property type="match status" value="1"/>
</dbReference>
<dbReference type="PROSITE" id="PS00178">
    <property type="entry name" value="AA_TRNA_LIGASE_I"/>
    <property type="match status" value="1"/>
</dbReference>
<gene>
    <name evidence="1" type="primary">trpS</name>
    <name type="ordered locus">Cj0388</name>
</gene>
<protein>
    <recommendedName>
        <fullName evidence="1">Tryptophan--tRNA ligase</fullName>
        <ecNumber evidence="1">6.1.1.2</ecNumber>
    </recommendedName>
    <alternativeName>
        <fullName evidence="1">Tryptophanyl-tRNA synthetase</fullName>
        <shortName evidence="1">TrpRS</shortName>
    </alternativeName>
</protein>
<comment type="function">
    <text evidence="1">Catalyzes the attachment of tryptophan to tRNA(Trp).</text>
</comment>
<comment type="catalytic activity">
    <reaction evidence="1">
        <text>tRNA(Trp) + L-tryptophan + ATP = L-tryptophyl-tRNA(Trp) + AMP + diphosphate + H(+)</text>
        <dbReference type="Rhea" id="RHEA:24080"/>
        <dbReference type="Rhea" id="RHEA-COMP:9671"/>
        <dbReference type="Rhea" id="RHEA-COMP:9705"/>
        <dbReference type="ChEBI" id="CHEBI:15378"/>
        <dbReference type="ChEBI" id="CHEBI:30616"/>
        <dbReference type="ChEBI" id="CHEBI:33019"/>
        <dbReference type="ChEBI" id="CHEBI:57912"/>
        <dbReference type="ChEBI" id="CHEBI:78442"/>
        <dbReference type="ChEBI" id="CHEBI:78535"/>
        <dbReference type="ChEBI" id="CHEBI:456215"/>
        <dbReference type="EC" id="6.1.1.2"/>
    </reaction>
</comment>
<comment type="subunit">
    <text evidence="1">Homodimer.</text>
</comment>
<comment type="subcellular location">
    <subcellularLocation>
        <location evidence="1">Cytoplasm</location>
    </subcellularLocation>
</comment>
<comment type="similarity">
    <text evidence="1">Belongs to the class-I aminoacyl-tRNA synthetase family.</text>
</comment>